<comment type="function">
    <text evidence="5 6">DNA repair enzyme that cleaves apurinic/apyrimidinic (AP) sites and removes 3'-blocking groups present at single strand breaks of damaged DNA. Provides the majority of the AP-endonuclease (APE) activity. Repairs phleomycin D1-induced DNA damage. Plays a role in oxidative damage repair.</text>
</comment>
<comment type="catalytic activity">
    <reaction evidence="6">
        <text>Exonucleolytic cleavage in the 3'- to 5'-direction to yield nucleoside 5'-phosphates.</text>
        <dbReference type="EC" id="3.1.11.2"/>
    </reaction>
</comment>
<comment type="cofactor">
    <cofactor evidence="1">
        <name>Mg(2+)</name>
        <dbReference type="ChEBI" id="CHEBI:18420"/>
    </cofactor>
    <cofactor evidence="1">
        <name>Mn(2+)</name>
        <dbReference type="ChEBI" id="CHEBI:29035"/>
    </cofactor>
    <text evidence="1">Probably binds two magnesium or manganese ions per subunit.</text>
</comment>
<comment type="subcellular location">
    <subcellularLocation>
        <location evidence="2">Nucleus</location>
    </subcellularLocation>
</comment>
<comment type="similarity">
    <text evidence="7">Belongs to the DNA repair enzymes AP/ExoA family.</text>
</comment>
<feature type="chain" id="PRO_0000200019" description="DNA-(apurinic or apyrimidinic site) endonuclease 2">
    <location>
        <begin position="1"/>
        <end position="523"/>
    </location>
</feature>
<feature type="zinc finger region" description="GRF-type" evidence="3">
    <location>
        <begin position="458"/>
        <end position="517"/>
    </location>
</feature>
<feature type="region of interest" description="Disordered" evidence="4">
    <location>
        <begin position="348"/>
        <end position="392"/>
    </location>
</feature>
<feature type="compositionally biased region" description="Polar residues" evidence="4">
    <location>
        <begin position="353"/>
        <end position="362"/>
    </location>
</feature>
<feature type="active site" evidence="1">
    <location>
        <position position="151"/>
    </location>
</feature>
<feature type="active site" description="Proton donor/acceptor" evidence="1">
    <location>
        <position position="191"/>
    </location>
</feature>
<feature type="binding site" evidence="1">
    <location>
        <position position="42"/>
    </location>
    <ligand>
        <name>Mg(2+)</name>
        <dbReference type="ChEBI" id="CHEBI:18420"/>
        <label>1</label>
    </ligand>
</feature>
<feature type="binding site" evidence="1">
    <location>
        <position position="191"/>
    </location>
    <ligand>
        <name>Mg(2+)</name>
        <dbReference type="ChEBI" id="CHEBI:18420"/>
        <label>2</label>
    </ligand>
</feature>
<feature type="binding site" evidence="1">
    <location>
        <position position="193"/>
    </location>
    <ligand>
        <name>Mg(2+)</name>
        <dbReference type="ChEBI" id="CHEBI:18420"/>
        <label>2</label>
    </ligand>
</feature>
<feature type="binding site" evidence="1">
    <location>
        <position position="294"/>
    </location>
    <ligand>
        <name>Mg(2+)</name>
        <dbReference type="ChEBI" id="CHEBI:18420"/>
        <label>1</label>
    </ligand>
</feature>
<feature type="binding site" evidence="3">
    <location>
        <position position="458"/>
    </location>
    <ligand>
        <name>Zn(2+)</name>
        <dbReference type="ChEBI" id="CHEBI:29105"/>
    </ligand>
</feature>
<feature type="binding site" evidence="3">
    <location>
        <position position="461"/>
    </location>
    <ligand>
        <name>Zn(2+)</name>
        <dbReference type="ChEBI" id="CHEBI:29105"/>
    </ligand>
</feature>
<feature type="binding site" evidence="3">
    <location>
        <position position="484"/>
    </location>
    <ligand>
        <name>Zn(2+)</name>
        <dbReference type="ChEBI" id="CHEBI:29105"/>
    </ligand>
</feature>
<feature type="binding site" evidence="3">
    <location>
        <position position="508"/>
    </location>
    <ligand>
        <name>Zn(2+)</name>
        <dbReference type="ChEBI" id="CHEBI:29105"/>
    </ligand>
</feature>
<feature type="site" description="Transition state stabilizer" evidence="1">
    <location>
        <position position="193"/>
    </location>
</feature>
<feature type="site" description="Important for catalytic activity" evidence="1">
    <location>
        <position position="269"/>
    </location>
</feature>
<feature type="site" description="Interaction with DNA substrate" evidence="1">
    <location>
        <position position="295"/>
    </location>
</feature>
<feature type="mutagenesis site" description="No change in activity; when associated with A-403." evidence="6">
    <original>F</original>
    <variation>A</variation>
    <location>
        <position position="402"/>
    </location>
</feature>
<feature type="mutagenesis site" description="No change in activity; when associated with A-402." evidence="6">
    <original>F</original>
    <variation>A</variation>
    <location>
        <position position="403"/>
    </location>
</feature>
<feature type="mutagenesis site" description="No change in activity; when associated with A-457 and A-458." evidence="6">
    <original>P</original>
    <variation>A</variation>
    <location>
        <position position="456"/>
    </location>
</feature>
<feature type="mutagenesis site" description="No change in activity; when associated with A-456 and A-458." evidence="6">
    <original>L</original>
    <variation>A</variation>
    <location>
        <position position="457"/>
    </location>
</feature>
<feature type="mutagenesis site" description="No change in activity; when associated with A-456 and A-457." evidence="6">
    <original>C</original>
    <variation>A</variation>
    <location>
        <position position="458"/>
    </location>
</feature>
<gene>
    <name type="primary">apn2</name>
    <name type="ORF">SPBC3D6.10</name>
</gene>
<accession>P87175</accession>
<organism>
    <name type="scientific">Schizosaccharomyces pombe (strain 972 / ATCC 24843)</name>
    <name type="common">Fission yeast</name>
    <dbReference type="NCBI Taxonomy" id="284812"/>
    <lineage>
        <taxon>Eukaryota</taxon>
        <taxon>Fungi</taxon>
        <taxon>Dikarya</taxon>
        <taxon>Ascomycota</taxon>
        <taxon>Taphrinomycotina</taxon>
        <taxon>Schizosaccharomycetes</taxon>
        <taxon>Schizosaccharomycetales</taxon>
        <taxon>Schizosaccharomycetaceae</taxon>
        <taxon>Schizosaccharomyces</taxon>
    </lineage>
</organism>
<evidence type="ECO:0000250" key="1"/>
<evidence type="ECO:0000255" key="2">
    <source>
        <dbReference type="PROSITE-ProRule" id="PRU00764"/>
    </source>
</evidence>
<evidence type="ECO:0000255" key="3">
    <source>
        <dbReference type="PROSITE-ProRule" id="PRU01343"/>
    </source>
</evidence>
<evidence type="ECO:0000256" key="4">
    <source>
        <dbReference type="SAM" id="MobiDB-lite"/>
    </source>
</evidence>
<evidence type="ECO:0000269" key="5">
    <source>
    </source>
</evidence>
<evidence type="ECO:0000269" key="6">
    <source>
    </source>
</evidence>
<evidence type="ECO:0000305" key="7"/>
<keyword id="KW-0227">DNA damage</keyword>
<keyword id="KW-0234">DNA repair</keyword>
<keyword id="KW-0378">Hydrolase</keyword>
<keyword id="KW-0460">Magnesium</keyword>
<keyword id="KW-0479">Metal-binding</keyword>
<keyword id="KW-0539">Nucleus</keyword>
<keyword id="KW-1185">Reference proteome</keyword>
<keyword id="KW-0862">Zinc</keyword>
<keyword id="KW-0863">Zinc-finger</keyword>
<dbReference type="EC" id="3.1.11.2" evidence="6"/>
<dbReference type="EMBL" id="AY483158">
    <property type="protein sequence ID" value="AAR83752.1"/>
    <property type="molecule type" value="mRNA"/>
</dbReference>
<dbReference type="EMBL" id="CU329671">
    <property type="protein sequence ID" value="CAB09119.1"/>
    <property type="molecule type" value="Genomic_DNA"/>
</dbReference>
<dbReference type="PIR" id="T40370">
    <property type="entry name" value="T40370"/>
</dbReference>
<dbReference type="RefSeq" id="NP_595522.1">
    <property type="nucleotide sequence ID" value="NM_001021431.2"/>
</dbReference>
<dbReference type="SMR" id="P87175"/>
<dbReference type="BioGRID" id="277204">
    <property type="interactions" value="28"/>
</dbReference>
<dbReference type="FunCoup" id="P87175">
    <property type="interactions" value="846"/>
</dbReference>
<dbReference type="STRING" id="284812.P87175"/>
<dbReference type="iPTMnet" id="P87175"/>
<dbReference type="PaxDb" id="4896-SPBC3D6.10.1"/>
<dbReference type="EnsemblFungi" id="SPBC3D6.10.1">
    <property type="protein sequence ID" value="SPBC3D6.10.1:pep"/>
    <property type="gene ID" value="SPBC3D6.10"/>
</dbReference>
<dbReference type="GeneID" id="2540679"/>
<dbReference type="KEGG" id="spo:2540679"/>
<dbReference type="PomBase" id="SPBC3D6.10">
    <property type="gene designation" value="apn2"/>
</dbReference>
<dbReference type="VEuPathDB" id="FungiDB:SPBC3D6.10"/>
<dbReference type="eggNOG" id="KOG1294">
    <property type="taxonomic scope" value="Eukaryota"/>
</dbReference>
<dbReference type="HOGENOM" id="CLU_010374_2_0_1"/>
<dbReference type="InParanoid" id="P87175"/>
<dbReference type="OMA" id="SFWICPR"/>
<dbReference type="PhylomeDB" id="P87175"/>
<dbReference type="PRO" id="PR:P87175"/>
<dbReference type="Proteomes" id="UP000002485">
    <property type="component" value="Chromosome II"/>
</dbReference>
<dbReference type="GO" id="GO:0005634">
    <property type="term" value="C:nucleus"/>
    <property type="evidence" value="ECO:0000314"/>
    <property type="project" value="PomBase"/>
</dbReference>
<dbReference type="GO" id="GO:0003677">
    <property type="term" value="F:DNA binding"/>
    <property type="evidence" value="ECO:0007669"/>
    <property type="project" value="InterPro"/>
</dbReference>
<dbReference type="GO" id="GO:0003906">
    <property type="term" value="F:DNA-(apurinic or apyrimidinic site) endonuclease activity"/>
    <property type="evidence" value="ECO:0000314"/>
    <property type="project" value="PomBase"/>
</dbReference>
<dbReference type="GO" id="GO:0008311">
    <property type="term" value="F:double-stranded DNA 3'-5' DNA exonuclease activity"/>
    <property type="evidence" value="ECO:0000315"/>
    <property type="project" value="PomBase"/>
</dbReference>
<dbReference type="GO" id="GO:0004519">
    <property type="term" value="F:endonuclease activity"/>
    <property type="evidence" value="ECO:0007669"/>
    <property type="project" value="InterPro"/>
</dbReference>
<dbReference type="GO" id="GO:0004528">
    <property type="term" value="F:phosphodiesterase I activity"/>
    <property type="evidence" value="ECO:0000314"/>
    <property type="project" value="PomBase"/>
</dbReference>
<dbReference type="GO" id="GO:0008081">
    <property type="term" value="F:phosphoric diester hydrolase activity"/>
    <property type="evidence" value="ECO:0000318"/>
    <property type="project" value="GO_Central"/>
</dbReference>
<dbReference type="GO" id="GO:0008270">
    <property type="term" value="F:zinc ion binding"/>
    <property type="evidence" value="ECO:0007669"/>
    <property type="project" value="UniProtKB-KW"/>
</dbReference>
<dbReference type="GO" id="GO:0006284">
    <property type="term" value="P:base-excision repair"/>
    <property type="evidence" value="ECO:0000269"/>
    <property type="project" value="PomBase"/>
</dbReference>
<dbReference type="GO" id="GO:0006281">
    <property type="term" value="P:DNA repair"/>
    <property type="evidence" value="ECO:0000315"/>
    <property type="project" value="PomBase"/>
</dbReference>
<dbReference type="CDD" id="cd09088">
    <property type="entry name" value="Ape2-like_AP-endo"/>
    <property type="match status" value="1"/>
</dbReference>
<dbReference type="FunFam" id="3.60.10.10:FF:000079">
    <property type="entry name" value="DNA-(apurinic or apyrimidinic site) lyase"/>
    <property type="match status" value="1"/>
</dbReference>
<dbReference type="Gene3D" id="3.60.10.10">
    <property type="entry name" value="Endonuclease/exonuclease/phosphatase"/>
    <property type="match status" value="1"/>
</dbReference>
<dbReference type="InterPro" id="IPR004808">
    <property type="entry name" value="AP_endonuc_1"/>
</dbReference>
<dbReference type="InterPro" id="IPR020847">
    <property type="entry name" value="AP_endonuclease_F1_BS"/>
</dbReference>
<dbReference type="InterPro" id="IPR020848">
    <property type="entry name" value="AP_endonuclease_F1_CS"/>
</dbReference>
<dbReference type="InterPro" id="IPR036691">
    <property type="entry name" value="Endo/exonu/phosph_ase_sf"/>
</dbReference>
<dbReference type="InterPro" id="IPR005135">
    <property type="entry name" value="Endo/exonuclease/phosphatase"/>
</dbReference>
<dbReference type="InterPro" id="IPR010666">
    <property type="entry name" value="Znf_GRF"/>
</dbReference>
<dbReference type="NCBIfam" id="TIGR00633">
    <property type="entry name" value="xth"/>
    <property type="match status" value="1"/>
</dbReference>
<dbReference type="PANTHER" id="PTHR22748">
    <property type="entry name" value="AP ENDONUCLEASE"/>
    <property type="match status" value="1"/>
</dbReference>
<dbReference type="PANTHER" id="PTHR22748:SF4">
    <property type="entry name" value="DNA-(APURINIC OR APYRIMIDINIC SITE) ENDONUCLEASE 2"/>
    <property type="match status" value="1"/>
</dbReference>
<dbReference type="Pfam" id="PF03372">
    <property type="entry name" value="Exo_endo_phos"/>
    <property type="match status" value="1"/>
</dbReference>
<dbReference type="SUPFAM" id="SSF56219">
    <property type="entry name" value="DNase I-like"/>
    <property type="match status" value="1"/>
</dbReference>
<dbReference type="PROSITE" id="PS00726">
    <property type="entry name" value="AP_NUCLEASE_F1_1"/>
    <property type="match status" value="1"/>
</dbReference>
<dbReference type="PROSITE" id="PS00727">
    <property type="entry name" value="AP_NUCLEASE_F1_2"/>
    <property type="match status" value="1"/>
</dbReference>
<dbReference type="PROSITE" id="PS51435">
    <property type="entry name" value="AP_NUCLEASE_F1_4"/>
    <property type="match status" value="1"/>
</dbReference>
<dbReference type="PROSITE" id="PS51999">
    <property type="entry name" value="ZF_GRF"/>
    <property type="match status" value="1"/>
</dbReference>
<reference evidence="7" key="1">
    <citation type="journal article" date="2004" name="Nucleic Acids Res.">
        <title>The major role of human AP-endonuclease homolog Apn2 in repair of abasic sites in Schizosaccharomyces pombe.</title>
        <authorList>
            <person name="Ribar B."/>
            <person name="Izumi T."/>
            <person name="Mitra S."/>
        </authorList>
    </citation>
    <scope>NUCLEOTIDE SEQUENCE [MRNA]</scope>
    <scope>FUNCTION</scope>
    <scope>CATALYTIC ACTIVITY</scope>
    <scope>MUTAGENESIS OF PHE-402; PHE-403; PRO-456; LEU-457 AND CYS-458</scope>
</reference>
<reference evidence="7" key="2">
    <citation type="journal article" date="2002" name="Nature">
        <title>The genome sequence of Schizosaccharomyces pombe.</title>
        <authorList>
            <person name="Wood V."/>
            <person name="Gwilliam R."/>
            <person name="Rajandream M.A."/>
            <person name="Lyne M.H."/>
            <person name="Lyne R."/>
            <person name="Stewart A."/>
            <person name="Sgouros J.G."/>
            <person name="Peat N."/>
            <person name="Hayles J."/>
            <person name="Baker S.G."/>
            <person name="Basham D."/>
            <person name="Bowman S."/>
            <person name="Brooks K."/>
            <person name="Brown D."/>
            <person name="Brown S."/>
            <person name="Chillingworth T."/>
            <person name="Churcher C.M."/>
            <person name="Collins M."/>
            <person name="Connor R."/>
            <person name="Cronin A."/>
            <person name="Davis P."/>
            <person name="Feltwell T."/>
            <person name="Fraser A."/>
            <person name="Gentles S."/>
            <person name="Goble A."/>
            <person name="Hamlin N."/>
            <person name="Harris D.E."/>
            <person name="Hidalgo J."/>
            <person name="Hodgson G."/>
            <person name="Holroyd S."/>
            <person name="Hornsby T."/>
            <person name="Howarth S."/>
            <person name="Huckle E.J."/>
            <person name="Hunt S."/>
            <person name="Jagels K."/>
            <person name="James K.D."/>
            <person name="Jones L."/>
            <person name="Jones M."/>
            <person name="Leather S."/>
            <person name="McDonald S."/>
            <person name="McLean J."/>
            <person name="Mooney P."/>
            <person name="Moule S."/>
            <person name="Mungall K.L."/>
            <person name="Murphy L.D."/>
            <person name="Niblett D."/>
            <person name="Odell C."/>
            <person name="Oliver K."/>
            <person name="O'Neil S."/>
            <person name="Pearson D."/>
            <person name="Quail M.A."/>
            <person name="Rabbinowitsch E."/>
            <person name="Rutherford K.M."/>
            <person name="Rutter S."/>
            <person name="Saunders D."/>
            <person name="Seeger K."/>
            <person name="Sharp S."/>
            <person name="Skelton J."/>
            <person name="Simmonds M.N."/>
            <person name="Squares R."/>
            <person name="Squares S."/>
            <person name="Stevens K."/>
            <person name="Taylor K."/>
            <person name="Taylor R.G."/>
            <person name="Tivey A."/>
            <person name="Walsh S.V."/>
            <person name="Warren T."/>
            <person name="Whitehead S."/>
            <person name="Woodward J.R."/>
            <person name="Volckaert G."/>
            <person name="Aert R."/>
            <person name="Robben J."/>
            <person name="Grymonprez B."/>
            <person name="Weltjens I."/>
            <person name="Vanstreels E."/>
            <person name="Rieger M."/>
            <person name="Schaefer M."/>
            <person name="Mueller-Auer S."/>
            <person name="Gabel C."/>
            <person name="Fuchs M."/>
            <person name="Duesterhoeft A."/>
            <person name="Fritzc C."/>
            <person name="Holzer E."/>
            <person name="Moestl D."/>
            <person name="Hilbert H."/>
            <person name="Borzym K."/>
            <person name="Langer I."/>
            <person name="Beck A."/>
            <person name="Lehrach H."/>
            <person name="Reinhardt R."/>
            <person name="Pohl T.M."/>
            <person name="Eger P."/>
            <person name="Zimmermann W."/>
            <person name="Wedler H."/>
            <person name="Wambutt R."/>
            <person name="Purnelle B."/>
            <person name="Goffeau A."/>
            <person name="Cadieu E."/>
            <person name="Dreano S."/>
            <person name="Gloux S."/>
            <person name="Lelaure V."/>
            <person name="Mottier S."/>
            <person name="Galibert F."/>
            <person name="Aves S.J."/>
            <person name="Xiang Z."/>
            <person name="Hunt C."/>
            <person name="Moore K."/>
            <person name="Hurst S.M."/>
            <person name="Lucas M."/>
            <person name="Rochet M."/>
            <person name="Gaillardin C."/>
            <person name="Tallada V.A."/>
            <person name="Garzon A."/>
            <person name="Thode G."/>
            <person name="Daga R.R."/>
            <person name="Cruzado L."/>
            <person name="Jimenez J."/>
            <person name="Sanchez M."/>
            <person name="del Rey F."/>
            <person name="Benito J."/>
            <person name="Dominguez A."/>
            <person name="Revuelta J.L."/>
            <person name="Moreno S."/>
            <person name="Armstrong J."/>
            <person name="Forsburg S.L."/>
            <person name="Cerutti L."/>
            <person name="Lowe T."/>
            <person name="McCombie W.R."/>
            <person name="Paulsen I."/>
            <person name="Potashkin J."/>
            <person name="Shpakovski G.V."/>
            <person name="Ussery D."/>
            <person name="Barrell B.G."/>
            <person name="Nurse P."/>
        </authorList>
    </citation>
    <scope>NUCLEOTIDE SEQUENCE [LARGE SCALE GENOMIC DNA]</scope>
    <source>
        <strain>972 / ATCC 24843</strain>
    </source>
</reference>
<reference evidence="7" key="3">
    <citation type="journal article" date="2003" name="DNA Repair">
        <title>Fission yeast Uve1 and Apn2 function in distinct oxidative damage repair pathways in vivo.</title>
        <authorList>
            <person name="Fraser J.L.A."/>
            <person name="Neill E."/>
            <person name="Davey S."/>
        </authorList>
    </citation>
    <scope>FUNCTION</scope>
</reference>
<sequence>MRILSWNVNGIQNPFNYFPWNKKNSYKEIFQELQADVICVQELKMQKDSFPQQYAVVEGFDSYFTFPKIRKGYSGVGFYVKKDVAIPVKAEEGITGILPVRGQKYSYSEAPEHEKIGFFPKDIDRKTANWIDSEGRCILLDFQMFILIGVYCPVNSGENRLEYRRAFYKALRERIERLIKEGNRKIILVGDVNILCNPIDTADQKDIIRESLIPSIMESRQWIRDLLLPSRLGLLLDIGRIQHPTRKGMFTCWNTRLNTRPTNYGTRIDYTLATPDLLPWVQDADIMAEVMGSDHCPVYLDLKEEYEGKKLSNFLSHSKEPPLLSTAHHSAYRPSKNIHSMFQHFNSMKKNKNNSPTQSENVSASASSGSSPTVSRANSVIDVDAYPPEKRRRKEQSKLLSFFAKQKEEKEETNKTEDVSIEVLDNNNESDIGLTVKKKVENGNAWKQIFSERAPPLCEGHKEPCKYLTVRKPGINYGRKFWICARPVGELIKNSNAVSEEDTQPFQCRFFIWDSDWRANSKD</sequence>
<name>APN2_SCHPO</name>
<proteinExistence type="evidence at protein level"/>
<protein>
    <recommendedName>
        <fullName>DNA-(apurinic or apyrimidinic site) endonuclease 2</fullName>
        <ecNumber evidence="6">3.1.11.2</ecNumber>
    </recommendedName>
    <alternativeName>
        <fullName>AP endonuclease 2</fullName>
    </alternativeName>
    <alternativeName>
        <fullName>Apurinic-apyrimidinic endonuclease 2</fullName>
    </alternativeName>
</protein>